<sequence>MTVLCVTGTCTGVGKTVVTAALASQANQAGIDVVVCKPVQTGTGIGDDDLAEIGRLSGVTELVGLARYPLPMAPVAAAEQAGQPLPSRDQLVQHIRGLDRPGRLTLVEGAGGLLVELADSGGTLRDLAVDLGAAMLVVVAAGLGTLNHTALTLEALAAQKVSCAGLVLGSWPAHPGLVESSNRDALARLAPMRAVLSAGAAQLSVADFAVMSAGAFDREWVATLVG</sequence>
<organism>
    <name type="scientific">Mycobacterium marinum (strain ATCC BAA-535 / M)</name>
    <dbReference type="NCBI Taxonomy" id="216594"/>
    <lineage>
        <taxon>Bacteria</taxon>
        <taxon>Bacillati</taxon>
        <taxon>Actinomycetota</taxon>
        <taxon>Actinomycetes</taxon>
        <taxon>Mycobacteriales</taxon>
        <taxon>Mycobacteriaceae</taxon>
        <taxon>Mycobacterium</taxon>
        <taxon>Mycobacterium ulcerans group</taxon>
    </lineage>
</organism>
<keyword id="KW-0067">ATP-binding</keyword>
<keyword id="KW-0093">Biotin biosynthesis</keyword>
<keyword id="KW-0963">Cytoplasm</keyword>
<keyword id="KW-0436">Ligase</keyword>
<keyword id="KW-0460">Magnesium</keyword>
<keyword id="KW-0479">Metal-binding</keyword>
<keyword id="KW-0547">Nucleotide-binding</keyword>
<keyword id="KW-1185">Reference proteome</keyword>
<feature type="chain" id="PRO_1000119877" description="ATP-dependent dethiobiotin synthetase BioD">
    <location>
        <begin position="1"/>
        <end position="226"/>
    </location>
</feature>
<feature type="active site" evidence="1">
    <location>
        <position position="37"/>
    </location>
</feature>
<feature type="binding site" evidence="1">
    <location>
        <begin position="12"/>
        <end position="17"/>
    </location>
    <ligand>
        <name>ATP</name>
        <dbReference type="ChEBI" id="CHEBI:30616"/>
    </ligand>
</feature>
<feature type="binding site" evidence="1">
    <location>
        <position position="16"/>
    </location>
    <ligand>
        <name>Mg(2+)</name>
        <dbReference type="ChEBI" id="CHEBI:18420"/>
    </ligand>
</feature>
<feature type="binding site" evidence="1">
    <location>
        <position position="41"/>
    </location>
    <ligand>
        <name>substrate</name>
    </ligand>
</feature>
<feature type="binding site" evidence="1">
    <location>
        <position position="49"/>
    </location>
    <ligand>
        <name>ATP</name>
        <dbReference type="ChEBI" id="CHEBI:30616"/>
    </ligand>
</feature>
<feature type="binding site" evidence="1">
    <location>
        <position position="49"/>
    </location>
    <ligand>
        <name>Mg(2+)</name>
        <dbReference type="ChEBI" id="CHEBI:18420"/>
    </ligand>
</feature>
<feature type="binding site" evidence="1">
    <location>
        <begin position="108"/>
        <end position="111"/>
    </location>
    <ligand>
        <name>ATP</name>
        <dbReference type="ChEBI" id="CHEBI:30616"/>
    </ligand>
</feature>
<feature type="binding site" evidence="1">
    <location>
        <position position="108"/>
    </location>
    <ligand>
        <name>Mg(2+)</name>
        <dbReference type="ChEBI" id="CHEBI:18420"/>
    </ligand>
</feature>
<feature type="binding site" evidence="1">
    <location>
        <begin position="169"/>
        <end position="170"/>
    </location>
    <ligand>
        <name>ATP</name>
        <dbReference type="ChEBI" id="CHEBI:30616"/>
    </ligand>
</feature>
<dbReference type="EC" id="6.3.3.3" evidence="1"/>
<dbReference type="EMBL" id="CP000854">
    <property type="protein sequence ID" value="ACC40834.1"/>
    <property type="molecule type" value="Genomic_DNA"/>
</dbReference>
<dbReference type="RefSeq" id="WP_012394133.1">
    <property type="nucleotide sequence ID" value="NC_010612.1"/>
</dbReference>
<dbReference type="SMR" id="B2HQ91"/>
<dbReference type="STRING" id="216594.MMAR_2385"/>
<dbReference type="KEGG" id="mmi:MMAR_2385"/>
<dbReference type="eggNOG" id="COG0132">
    <property type="taxonomic scope" value="Bacteria"/>
</dbReference>
<dbReference type="HOGENOM" id="CLU_072551_1_0_11"/>
<dbReference type="OrthoDB" id="9802610at2"/>
<dbReference type="UniPathway" id="UPA00078">
    <property type="reaction ID" value="UER00161"/>
</dbReference>
<dbReference type="Proteomes" id="UP000001190">
    <property type="component" value="Chromosome"/>
</dbReference>
<dbReference type="GO" id="GO:0005829">
    <property type="term" value="C:cytosol"/>
    <property type="evidence" value="ECO:0007669"/>
    <property type="project" value="TreeGrafter"/>
</dbReference>
<dbReference type="GO" id="GO:0005524">
    <property type="term" value="F:ATP binding"/>
    <property type="evidence" value="ECO:0007669"/>
    <property type="project" value="UniProtKB-UniRule"/>
</dbReference>
<dbReference type="GO" id="GO:0004141">
    <property type="term" value="F:dethiobiotin synthase activity"/>
    <property type="evidence" value="ECO:0007669"/>
    <property type="project" value="UniProtKB-UniRule"/>
</dbReference>
<dbReference type="GO" id="GO:0000287">
    <property type="term" value="F:magnesium ion binding"/>
    <property type="evidence" value="ECO:0007669"/>
    <property type="project" value="UniProtKB-UniRule"/>
</dbReference>
<dbReference type="GO" id="GO:0009102">
    <property type="term" value="P:biotin biosynthetic process"/>
    <property type="evidence" value="ECO:0007669"/>
    <property type="project" value="UniProtKB-UniRule"/>
</dbReference>
<dbReference type="CDD" id="cd03109">
    <property type="entry name" value="DTBS"/>
    <property type="match status" value="1"/>
</dbReference>
<dbReference type="FunFam" id="3.40.50.300:FF:002079">
    <property type="entry name" value="ATP-dependent dethiobiotin synthetase BioD"/>
    <property type="match status" value="1"/>
</dbReference>
<dbReference type="Gene3D" id="3.40.50.300">
    <property type="entry name" value="P-loop containing nucleotide triphosphate hydrolases"/>
    <property type="match status" value="1"/>
</dbReference>
<dbReference type="HAMAP" id="MF_00336">
    <property type="entry name" value="BioD"/>
    <property type="match status" value="1"/>
</dbReference>
<dbReference type="InterPro" id="IPR004472">
    <property type="entry name" value="DTB_synth_BioD"/>
</dbReference>
<dbReference type="InterPro" id="IPR027417">
    <property type="entry name" value="P-loop_NTPase"/>
</dbReference>
<dbReference type="NCBIfam" id="TIGR00347">
    <property type="entry name" value="bioD"/>
    <property type="match status" value="1"/>
</dbReference>
<dbReference type="PANTHER" id="PTHR43210">
    <property type="entry name" value="DETHIOBIOTIN SYNTHETASE"/>
    <property type="match status" value="1"/>
</dbReference>
<dbReference type="PANTHER" id="PTHR43210:SF5">
    <property type="entry name" value="DETHIOBIOTIN SYNTHETASE"/>
    <property type="match status" value="1"/>
</dbReference>
<dbReference type="Pfam" id="PF13500">
    <property type="entry name" value="AAA_26"/>
    <property type="match status" value="1"/>
</dbReference>
<dbReference type="PIRSF" id="PIRSF006755">
    <property type="entry name" value="DTB_synth"/>
    <property type="match status" value="1"/>
</dbReference>
<dbReference type="SUPFAM" id="SSF52540">
    <property type="entry name" value="P-loop containing nucleoside triphosphate hydrolases"/>
    <property type="match status" value="1"/>
</dbReference>
<comment type="function">
    <text evidence="1">Catalyzes a mechanistically unusual reaction, the ATP-dependent insertion of CO2 between the N7 and N8 nitrogen atoms of 7,8-diaminopelargonic acid (DAPA, also called 7,8-diammoniononanoate) to form a ureido ring.</text>
</comment>
<comment type="catalytic activity">
    <reaction evidence="1">
        <text>(7R,8S)-7,8-diammoniononanoate + CO2 + ATP = (4R,5S)-dethiobiotin + ADP + phosphate + 3 H(+)</text>
        <dbReference type="Rhea" id="RHEA:15805"/>
        <dbReference type="ChEBI" id="CHEBI:15378"/>
        <dbReference type="ChEBI" id="CHEBI:16526"/>
        <dbReference type="ChEBI" id="CHEBI:30616"/>
        <dbReference type="ChEBI" id="CHEBI:43474"/>
        <dbReference type="ChEBI" id="CHEBI:149469"/>
        <dbReference type="ChEBI" id="CHEBI:149473"/>
        <dbReference type="ChEBI" id="CHEBI:456216"/>
        <dbReference type="EC" id="6.3.3.3"/>
    </reaction>
</comment>
<comment type="cofactor">
    <cofactor evidence="1">
        <name>Mg(2+)</name>
        <dbReference type="ChEBI" id="CHEBI:18420"/>
    </cofactor>
</comment>
<comment type="pathway">
    <text evidence="1">Cofactor biosynthesis; biotin biosynthesis; biotin from 7,8-diaminononanoate: step 1/2.</text>
</comment>
<comment type="subunit">
    <text evidence="1">Homodimer.</text>
</comment>
<comment type="subcellular location">
    <subcellularLocation>
        <location evidence="1">Cytoplasm</location>
    </subcellularLocation>
</comment>
<comment type="similarity">
    <text evidence="1">Belongs to the dethiobiotin synthetase family.</text>
</comment>
<accession>B2HQ91</accession>
<name>BIOD_MYCMM</name>
<evidence type="ECO:0000255" key="1">
    <source>
        <dbReference type="HAMAP-Rule" id="MF_00336"/>
    </source>
</evidence>
<reference key="1">
    <citation type="journal article" date="2008" name="Genome Res.">
        <title>Insights from the complete genome sequence of Mycobacterium marinum on the evolution of Mycobacterium tuberculosis.</title>
        <authorList>
            <person name="Stinear T.P."/>
            <person name="Seemann T."/>
            <person name="Harrison P.F."/>
            <person name="Jenkin G.A."/>
            <person name="Davies J.K."/>
            <person name="Johnson P.D."/>
            <person name="Abdellah Z."/>
            <person name="Arrowsmith C."/>
            <person name="Chillingworth T."/>
            <person name="Churcher C."/>
            <person name="Clarke K."/>
            <person name="Cronin A."/>
            <person name="Davis P."/>
            <person name="Goodhead I."/>
            <person name="Holroyd N."/>
            <person name="Jagels K."/>
            <person name="Lord A."/>
            <person name="Moule S."/>
            <person name="Mungall K."/>
            <person name="Norbertczak H."/>
            <person name="Quail M.A."/>
            <person name="Rabbinowitsch E."/>
            <person name="Walker D."/>
            <person name="White B."/>
            <person name="Whitehead S."/>
            <person name="Small P.L."/>
            <person name="Brosch R."/>
            <person name="Ramakrishnan L."/>
            <person name="Fischbach M.A."/>
            <person name="Parkhill J."/>
            <person name="Cole S.T."/>
        </authorList>
    </citation>
    <scope>NUCLEOTIDE SEQUENCE [LARGE SCALE GENOMIC DNA]</scope>
    <source>
        <strain>ATCC BAA-535 / M</strain>
    </source>
</reference>
<proteinExistence type="inferred from homology"/>
<protein>
    <recommendedName>
        <fullName evidence="1">ATP-dependent dethiobiotin synthetase BioD</fullName>
        <ecNumber evidence="1">6.3.3.3</ecNumber>
    </recommendedName>
    <alternativeName>
        <fullName evidence="1">DTB synthetase</fullName>
        <shortName evidence="1">DTBS</shortName>
    </alternativeName>
    <alternativeName>
        <fullName evidence="1">Dethiobiotin synthase</fullName>
    </alternativeName>
</protein>
<gene>
    <name evidence="1" type="primary">bioD</name>
    <name type="ordered locus">MMAR_2385</name>
</gene>